<name>TIG_ENTFA</name>
<comment type="function">
    <text evidence="1">Involved in protein export. Acts as a chaperone by maintaining the newly synthesized protein in an open conformation. Functions as a peptidyl-prolyl cis-trans isomerase.</text>
</comment>
<comment type="catalytic activity">
    <reaction evidence="1">
        <text>[protein]-peptidylproline (omega=180) = [protein]-peptidylproline (omega=0)</text>
        <dbReference type="Rhea" id="RHEA:16237"/>
        <dbReference type="Rhea" id="RHEA-COMP:10747"/>
        <dbReference type="Rhea" id="RHEA-COMP:10748"/>
        <dbReference type="ChEBI" id="CHEBI:83833"/>
        <dbReference type="ChEBI" id="CHEBI:83834"/>
        <dbReference type="EC" id="5.2.1.8"/>
    </reaction>
</comment>
<comment type="subcellular location">
    <subcellularLocation>
        <location>Cytoplasm</location>
    </subcellularLocation>
    <text evidence="1">About half TF is bound to the ribosome near the polypeptide exit tunnel while the other half is free in the cytoplasm.</text>
</comment>
<comment type="domain">
    <text evidence="1">Consists of 3 domains; the N-terminus binds the ribosome, the middle domain has PPIase activity, while the C-terminus has intrinsic chaperone activity on its own.</text>
</comment>
<comment type="similarity">
    <text evidence="1">Belongs to the FKBP-type PPIase family. Tig subfamily.</text>
</comment>
<sequence>MSAKWEKKGTNDGVLTFSIEQAVIEKGLTQAFNKVKKNLNVPGFRKGKVSRTVFNRMYGEEALYEDALNAVLPEAYEAAVLEAGIEPVAQPKIDVESMNKGEDWVITAEVTVKPEVKLGEYKNLTVSKQDREVTDEDVEARLKREQESQAELVIKEDAAAENGDTVVIDFEGFLGDEAFEGGKGENYSLELGSNSFIPGFEDQLVGKKAGEEVEVNVTFPEDYQAEDLAGKEAVFKVTVHEVKAKELPELDDEFAKDVDDSVESLDELKEKFRKELTEAKEAAAEEAKDEEAIRLAVENAEIVELPHVMVHDEVHRSMDEFLNNMQRQGISPEMYYQLTGSTEEDLHKQFEGEAETRTKTNLVIEAVAKAENIEVTQEDIDAEVKDLAEQYNMPEAQVRKVLNNDMLEHDIRMKRAVETITETAVEK</sequence>
<keyword id="KW-0131">Cell cycle</keyword>
<keyword id="KW-0132">Cell division</keyword>
<keyword id="KW-0143">Chaperone</keyword>
<keyword id="KW-0963">Cytoplasm</keyword>
<keyword id="KW-0413">Isomerase</keyword>
<keyword id="KW-1185">Reference proteome</keyword>
<keyword id="KW-0697">Rotamase</keyword>
<feature type="chain" id="PRO_0000179352" description="Trigger factor">
    <location>
        <begin position="1"/>
        <end position="427"/>
    </location>
</feature>
<feature type="domain" description="PPIase FKBP-type" evidence="1">
    <location>
        <begin position="163"/>
        <end position="248"/>
    </location>
</feature>
<protein>
    <recommendedName>
        <fullName evidence="1">Trigger factor</fullName>
        <shortName evidence="1">TF</shortName>
        <ecNumber evidence="1">5.2.1.8</ecNumber>
    </recommendedName>
    <alternativeName>
        <fullName evidence="1">PPIase</fullName>
    </alternativeName>
</protein>
<gene>
    <name evidence="1" type="primary">tig</name>
    <name type="ordered locus">EF_0715</name>
</gene>
<organism>
    <name type="scientific">Enterococcus faecalis (strain ATCC 700802 / V583)</name>
    <dbReference type="NCBI Taxonomy" id="226185"/>
    <lineage>
        <taxon>Bacteria</taxon>
        <taxon>Bacillati</taxon>
        <taxon>Bacillota</taxon>
        <taxon>Bacilli</taxon>
        <taxon>Lactobacillales</taxon>
        <taxon>Enterococcaceae</taxon>
        <taxon>Enterococcus</taxon>
    </lineage>
</organism>
<dbReference type="EC" id="5.2.1.8" evidence="1"/>
<dbReference type="EMBL" id="AE016830">
    <property type="protein sequence ID" value="AAO80535.1"/>
    <property type="molecule type" value="Genomic_DNA"/>
</dbReference>
<dbReference type="RefSeq" id="NP_814465.1">
    <property type="nucleotide sequence ID" value="NC_004668.1"/>
</dbReference>
<dbReference type="RefSeq" id="WP_002355556.1">
    <property type="nucleotide sequence ID" value="NZ_KE136527.1"/>
</dbReference>
<dbReference type="SMR" id="Q837W3"/>
<dbReference type="STRING" id="226185.EF_0715"/>
<dbReference type="EnsemblBacteria" id="AAO80535">
    <property type="protein sequence ID" value="AAO80535"/>
    <property type="gene ID" value="EF_0715"/>
</dbReference>
<dbReference type="GeneID" id="60893014"/>
<dbReference type="KEGG" id="efa:EF0715"/>
<dbReference type="PATRIC" id="fig|226185.45.peg.2656"/>
<dbReference type="eggNOG" id="COG0544">
    <property type="taxonomic scope" value="Bacteria"/>
</dbReference>
<dbReference type="HOGENOM" id="CLU_033058_3_2_9"/>
<dbReference type="Proteomes" id="UP000001415">
    <property type="component" value="Chromosome"/>
</dbReference>
<dbReference type="GO" id="GO:0005737">
    <property type="term" value="C:cytoplasm"/>
    <property type="evidence" value="ECO:0007669"/>
    <property type="project" value="UniProtKB-SubCell"/>
</dbReference>
<dbReference type="GO" id="GO:0003755">
    <property type="term" value="F:peptidyl-prolyl cis-trans isomerase activity"/>
    <property type="evidence" value="ECO:0007669"/>
    <property type="project" value="UniProtKB-UniRule"/>
</dbReference>
<dbReference type="GO" id="GO:0044183">
    <property type="term" value="F:protein folding chaperone"/>
    <property type="evidence" value="ECO:0007669"/>
    <property type="project" value="TreeGrafter"/>
</dbReference>
<dbReference type="GO" id="GO:0043022">
    <property type="term" value="F:ribosome binding"/>
    <property type="evidence" value="ECO:0007669"/>
    <property type="project" value="TreeGrafter"/>
</dbReference>
<dbReference type="GO" id="GO:0051083">
    <property type="term" value="P:'de novo' cotranslational protein folding"/>
    <property type="evidence" value="ECO:0007669"/>
    <property type="project" value="TreeGrafter"/>
</dbReference>
<dbReference type="GO" id="GO:0051301">
    <property type="term" value="P:cell division"/>
    <property type="evidence" value="ECO:0007669"/>
    <property type="project" value="UniProtKB-KW"/>
</dbReference>
<dbReference type="GO" id="GO:0061077">
    <property type="term" value="P:chaperone-mediated protein folding"/>
    <property type="evidence" value="ECO:0007669"/>
    <property type="project" value="TreeGrafter"/>
</dbReference>
<dbReference type="GO" id="GO:0015031">
    <property type="term" value="P:protein transport"/>
    <property type="evidence" value="ECO:0007669"/>
    <property type="project" value="UniProtKB-UniRule"/>
</dbReference>
<dbReference type="GO" id="GO:0043335">
    <property type="term" value="P:protein unfolding"/>
    <property type="evidence" value="ECO:0007669"/>
    <property type="project" value="TreeGrafter"/>
</dbReference>
<dbReference type="FunFam" id="3.10.50.40:FF:000001">
    <property type="entry name" value="Trigger factor"/>
    <property type="match status" value="1"/>
</dbReference>
<dbReference type="Gene3D" id="3.10.50.40">
    <property type="match status" value="1"/>
</dbReference>
<dbReference type="Gene3D" id="3.30.70.1050">
    <property type="entry name" value="Trigger factor ribosome-binding domain"/>
    <property type="match status" value="1"/>
</dbReference>
<dbReference type="Gene3D" id="1.10.3120.10">
    <property type="entry name" value="Trigger factor, C-terminal domain"/>
    <property type="match status" value="1"/>
</dbReference>
<dbReference type="HAMAP" id="MF_00303">
    <property type="entry name" value="Trigger_factor_Tig"/>
    <property type="match status" value="1"/>
</dbReference>
<dbReference type="InterPro" id="IPR046357">
    <property type="entry name" value="PPIase_dom_sf"/>
</dbReference>
<dbReference type="InterPro" id="IPR001179">
    <property type="entry name" value="PPIase_FKBP_dom"/>
</dbReference>
<dbReference type="InterPro" id="IPR005215">
    <property type="entry name" value="Trig_fac"/>
</dbReference>
<dbReference type="InterPro" id="IPR008880">
    <property type="entry name" value="Trigger_fac_C"/>
</dbReference>
<dbReference type="InterPro" id="IPR037041">
    <property type="entry name" value="Trigger_fac_C_sf"/>
</dbReference>
<dbReference type="InterPro" id="IPR008881">
    <property type="entry name" value="Trigger_fac_ribosome-bd_bac"/>
</dbReference>
<dbReference type="InterPro" id="IPR036611">
    <property type="entry name" value="Trigger_fac_ribosome-bd_sf"/>
</dbReference>
<dbReference type="InterPro" id="IPR027304">
    <property type="entry name" value="Trigger_fact/SurA_dom_sf"/>
</dbReference>
<dbReference type="NCBIfam" id="TIGR00115">
    <property type="entry name" value="tig"/>
    <property type="match status" value="1"/>
</dbReference>
<dbReference type="PANTHER" id="PTHR30560">
    <property type="entry name" value="TRIGGER FACTOR CHAPERONE AND PEPTIDYL-PROLYL CIS/TRANS ISOMERASE"/>
    <property type="match status" value="1"/>
</dbReference>
<dbReference type="PANTHER" id="PTHR30560:SF3">
    <property type="entry name" value="TRIGGER FACTOR-LIKE PROTEIN TIG, CHLOROPLASTIC"/>
    <property type="match status" value="1"/>
</dbReference>
<dbReference type="Pfam" id="PF00254">
    <property type="entry name" value="FKBP_C"/>
    <property type="match status" value="1"/>
</dbReference>
<dbReference type="Pfam" id="PF05698">
    <property type="entry name" value="Trigger_C"/>
    <property type="match status" value="1"/>
</dbReference>
<dbReference type="Pfam" id="PF05697">
    <property type="entry name" value="Trigger_N"/>
    <property type="match status" value="1"/>
</dbReference>
<dbReference type="PIRSF" id="PIRSF003095">
    <property type="entry name" value="Trigger_factor"/>
    <property type="match status" value="1"/>
</dbReference>
<dbReference type="SUPFAM" id="SSF54534">
    <property type="entry name" value="FKBP-like"/>
    <property type="match status" value="1"/>
</dbReference>
<dbReference type="SUPFAM" id="SSF109998">
    <property type="entry name" value="Triger factor/SurA peptide-binding domain-like"/>
    <property type="match status" value="1"/>
</dbReference>
<dbReference type="SUPFAM" id="SSF102735">
    <property type="entry name" value="Trigger factor ribosome-binding domain"/>
    <property type="match status" value="1"/>
</dbReference>
<dbReference type="PROSITE" id="PS50059">
    <property type="entry name" value="FKBP_PPIASE"/>
    <property type="match status" value="1"/>
</dbReference>
<accession>Q837W3</accession>
<reference key="1">
    <citation type="journal article" date="2003" name="Science">
        <title>Role of mobile DNA in the evolution of vancomycin-resistant Enterococcus faecalis.</title>
        <authorList>
            <person name="Paulsen I.T."/>
            <person name="Banerjei L."/>
            <person name="Myers G.S.A."/>
            <person name="Nelson K.E."/>
            <person name="Seshadri R."/>
            <person name="Read T.D."/>
            <person name="Fouts D.E."/>
            <person name="Eisen J.A."/>
            <person name="Gill S.R."/>
            <person name="Heidelberg J.F."/>
            <person name="Tettelin H."/>
            <person name="Dodson R.J."/>
            <person name="Umayam L.A."/>
            <person name="Brinkac L.M."/>
            <person name="Beanan M.J."/>
            <person name="Daugherty S.C."/>
            <person name="DeBoy R.T."/>
            <person name="Durkin S.A."/>
            <person name="Kolonay J.F."/>
            <person name="Madupu R."/>
            <person name="Nelson W.C."/>
            <person name="Vamathevan J.J."/>
            <person name="Tran B."/>
            <person name="Upton J."/>
            <person name="Hansen T."/>
            <person name="Shetty J."/>
            <person name="Khouri H.M."/>
            <person name="Utterback T.R."/>
            <person name="Radune D."/>
            <person name="Ketchum K.A."/>
            <person name="Dougherty B.A."/>
            <person name="Fraser C.M."/>
        </authorList>
    </citation>
    <scope>NUCLEOTIDE SEQUENCE [LARGE SCALE GENOMIC DNA]</scope>
    <source>
        <strain>ATCC 700802 / V583</strain>
    </source>
</reference>
<evidence type="ECO:0000255" key="1">
    <source>
        <dbReference type="HAMAP-Rule" id="MF_00303"/>
    </source>
</evidence>
<proteinExistence type="inferred from homology"/>